<dbReference type="EC" id="2.7.1.130" evidence="1"/>
<dbReference type="EMBL" id="CP001096">
    <property type="protein sequence ID" value="ACE99889.1"/>
    <property type="molecule type" value="Genomic_DNA"/>
</dbReference>
<dbReference type="RefSeq" id="WP_012494863.1">
    <property type="nucleotide sequence ID" value="NC_011004.1"/>
</dbReference>
<dbReference type="SMR" id="B3QIG6"/>
<dbReference type="KEGG" id="rpt:Rpal_1350"/>
<dbReference type="HOGENOM" id="CLU_038816_0_0_5"/>
<dbReference type="OrthoDB" id="9766423at2"/>
<dbReference type="UniPathway" id="UPA00359">
    <property type="reaction ID" value="UER00482"/>
</dbReference>
<dbReference type="Proteomes" id="UP000001725">
    <property type="component" value="Chromosome"/>
</dbReference>
<dbReference type="GO" id="GO:0005886">
    <property type="term" value="C:plasma membrane"/>
    <property type="evidence" value="ECO:0007669"/>
    <property type="project" value="TreeGrafter"/>
</dbReference>
<dbReference type="GO" id="GO:0005524">
    <property type="term" value="F:ATP binding"/>
    <property type="evidence" value="ECO:0007669"/>
    <property type="project" value="UniProtKB-UniRule"/>
</dbReference>
<dbReference type="GO" id="GO:0009029">
    <property type="term" value="F:tetraacyldisaccharide 4'-kinase activity"/>
    <property type="evidence" value="ECO:0007669"/>
    <property type="project" value="UniProtKB-UniRule"/>
</dbReference>
<dbReference type="GO" id="GO:0009245">
    <property type="term" value="P:lipid A biosynthetic process"/>
    <property type="evidence" value="ECO:0007669"/>
    <property type="project" value="UniProtKB-UniRule"/>
</dbReference>
<dbReference type="GO" id="GO:0009244">
    <property type="term" value="P:lipopolysaccharide core region biosynthetic process"/>
    <property type="evidence" value="ECO:0007669"/>
    <property type="project" value="TreeGrafter"/>
</dbReference>
<dbReference type="HAMAP" id="MF_00409">
    <property type="entry name" value="LpxK"/>
    <property type="match status" value="1"/>
</dbReference>
<dbReference type="InterPro" id="IPR003758">
    <property type="entry name" value="LpxK"/>
</dbReference>
<dbReference type="InterPro" id="IPR027417">
    <property type="entry name" value="P-loop_NTPase"/>
</dbReference>
<dbReference type="NCBIfam" id="TIGR00682">
    <property type="entry name" value="lpxK"/>
    <property type="match status" value="1"/>
</dbReference>
<dbReference type="PANTHER" id="PTHR42724">
    <property type="entry name" value="TETRAACYLDISACCHARIDE 4'-KINASE"/>
    <property type="match status" value="1"/>
</dbReference>
<dbReference type="PANTHER" id="PTHR42724:SF1">
    <property type="entry name" value="TETRAACYLDISACCHARIDE 4'-KINASE, MITOCHONDRIAL-RELATED"/>
    <property type="match status" value="1"/>
</dbReference>
<dbReference type="Pfam" id="PF02606">
    <property type="entry name" value="LpxK"/>
    <property type="match status" value="1"/>
</dbReference>
<dbReference type="SUPFAM" id="SSF52540">
    <property type="entry name" value="P-loop containing nucleoside triphosphate hydrolases"/>
    <property type="match status" value="1"/>
</dbReference>
<evidence type="ECO:0000255" key="1">
    <source>
        <dbReference type="HAMAP-Rule" id="MF_00409"/>
    </source>
</evidence>
<organism>
    <name type="scientific">Rhodopseudomonas palustris (strain TIE-1)</name>
    <dbReference type="NCBI Taxonomy" id="395960"/>
    <lineage>
        <taxon>Bacteria</taxon>
        <taxon>Pseudomonadati</taxon>
        <taxon>Pseudomonadota</taxon>
        <taxon>Alphaproteobacteria</taxon>
        <taxon>Hyphomicrobiales</taxon>
        <taxon>Nitrobacteraceae</taxon>
        <taxon>Rhodopseudomonas</taxon>
    </lineage>
</organism>
<gene>
    <name evidence="1" type="primary">lpxK</name>
    <name type="ordered locus">Rpal_1350</name>
</gene>
<protein>
    <recommendedName>
        <fullName evidence="1">Tetraacyldisaccharide 4'-kinase</fullName>
        <ecNumber evidence="1">2.7.1.130</ecNumber>
    </recommendedName>
    <alternativeName>
        <fullName evidence="1">Lipid A 4'-kinase</fullName>
    </alternativeName>
</protein>
<feature type="chain" id="PRO_1000123734" description="Tetraacyldisaccharide 4'-kinase">
    <location>
        <begin position="1"/>
        <end position="340"/>
    </location>
</feature>
<feature type="binding site" evidence="1">
    <location>
        <begin position="51"/>
        <end position="58"/>
    </location>
    <ligand>
        <name>ATP</name>
        <dbReference type="ChEBI" id="CHEBI:30616"/>
    </ligand>
</feature>
<sequence>MREPGFWHRPPSLVSRLLLPIAAIYGNIAAARMQKAGTTVGVPVLCVGNYHMGGAGKTPTTLALVALLREFGETPVVLSRGYGGRLQGPVQVDPSRHSAADIGDEPLMMARRLAVVVARDRTDGAALACALGATVILMDDGFQNPALTKDASLIVVDSHRSIGNGSVFPAGPLRAPLPLQVARTDALVVVGDGAAADGLAQQITTKGGVVLRARLVPEPASVEALRGRRVLAFAGIGDPARFVATLRGSGVEVVEQRAFADHHPFTAEELAELAAAAKRDGLTLVTTEKDLARIGRAQQALGVEIVPFAVTLAFGDEAKLRLFLLDRLNGARAAKLAGRR</sequence>
<accession>B3QIG6</accession>
<reference key="1">
    <citation type="submission" date="2008-05" db="EMBL/GenBank/DDBJ databases">
        <title>Complete sequence of Rhodopseudomonas palustris TIE-1.</title>
        <authorList>
            <consortium name="US DOE Joint Genome Institute"/>
            <person name="Lucas S."/>
            <person name="Copeland A."/>
            <person name="Lapidus A."/>
            <person name="Glavina del Rio T."/>
            <person name="Dalin E."/>
            <person name="Tice H."/>
            <person name="Pitluck S."/>
            <person name="Chain P."/>
            <person name="Malfatti S."/>
            <person name="Shin M."/>
            <person name="Vergez L."/>
            <person name="Lang D."/>
            <person name="Schmutz J."/>
            <person name="Larimer F."/>
            <person name="Land M."/>
            <person name="Hauser L."/>
            <person name="Kyrpides N."/>
            <person name="Mikhailova N."/>
            <person name="Emerson D."/>
            <person name="Newman D.K."/>
            <person name="Roden E."/>
            <person name="Richardson P."/>
        </authorList>
    </citation>
    <scope>NUCLEOTIDE SEQUENCE [LARGE SCALE GENOMIC DNA]</scope>
    <source>
        <strain>TIE-1</strain>
    </source>
</reference>
<comment type="function">
    <text evidence="1">Transfers the gamma-phosphate of ATP to the 4'-position of a tetraacyldisaccharide 1-phosphate intermediate (termed DS-1-P) to form tetraacyldisaccharide 1,4'-bis-phosphate (lipid IVA).</text>
</comment>
<comment type="catalytic activity">
    <reaction evidence="1">
        <text>a lipid A disaccharide + ATP = a lipid IVA + ADP + H(+)</text>
        <dbReference type="Rhea" id="RHEA:67840"/>
        <dbReference type="ChEBI" id="CHEBI:15378"/>
        <dbReference type="ChEBI" id="CHEBI:30616"/>
        <dbReference type="ChEBI" id="CHEBI:176343"/>
        <dbReference type="ChEBI" id="CHEBI:176425"/>
        <dbReference type="ChEBI" id="CHEBI:456216"/>
        <dbReference type="EC" id="2.7.1.130"/>
    </reaction>
</comment>
<comment type="pathway">
    <text evidence="1">Glycolipid biosynthesis; lipid IV(A) biosynthesis; lipid IV(A) from (3R)-3-hydroxytetradecanoyl-[acyl-carrier-protein] and UDP-N-acetyl-alpha-D-glucosamine: step 6/6.</text>
</comment>
<comment type="similarity">
    <text evidence="1">Belongs to the LpxK family.</text>
</comment>
<keyword id="KW-0067">ATP-binding</keyword>
<keyword id="KW-0418">Kinase</keyword>
<keyword id="KW-0441">Lipid A biosynthesis</keyword>
<keyword id="KW-0444">Lipid biosynthesis</keyword>
<keyword id="KW-0443">Lipid metabolism</keyword>
<keyword id="KW-0547">Nucleotide-binding</keyword>
<keyword id="KW-0808">Transferase</keyword>
<proteinExistence type="inferred from homology"/>
<name>LPXK_RHOPT</name>